<feature type="chain" id="PRO_1000132658" description="Flagellar hook-basal body complex protein FliE">
    <location>
        <begin position="1"/>
        <end position="104"/>
    </location>
</feature>
<proteinExistence type="inferred from homology"/>
<gene>
    <name evidence="1" type="primary">fliE</name>
    <name type="ordered locus">ECSE_2168</name>
</gene>
<dbReference type="EMBL" id="AP009240">
    <property type="protein sequence ID" value="BAG77692.1"/>
    <property type="molecule type" value="Genomic_DNA"/>
</dbReference>
<dbReference type="RefSeq" id="WP_001274295.1">
    <property type="nucleotide sequence ID" value="NC_011415.1"/>
</dbReference>
<dbReference type="SMR" id="B6I0Y4"/>
<dbReference type="GeneID" id="75205822"/>
<dbReference type="KEGG" id="ecy:ECSE_2168"/>
<dbReference type="HOGENOM" id="CLU_147249_0_2_6"/>
<dbReference type="Proteomes" id="UP000008199">
    <property type="component" value="Chromosome"/>
</dbReference>
<dbReference type="GO" id="GO:0009425">
    <property type="term" value="C:bacterial-type flagellum basal body"/>
    <property type="evidence" value="ECO:0007669"/>
    <property type="project" value="UniProtKB-SubCell"/>
</dbReference>
<dbReference type="GO" id="GO:0003774">
    <property type="term" value="F:cytoskeletal motor activity"/>
    <property type="evidence" value="ECO:0007669"/>
    <property type="project" value="InterPro"/>
</dbReference>
<dbReference type="GO" id="GO:0005198">
    <property type="term" value="F:structural molecule activity"/>
    <property type="evidence" value="ECO:0007669"/>
    <property type="project" value="InterPro"/>
</dbReference>
<dbReference type="GO" id="GO:0071973">
    <property type="term" value="P:bacterial-type flagellum-dependent cell motility"/>
    <property type="evidence" value="ECO:0007669"/>
    <property type="project" value="InterPro"/>
</dbReference>
<dbReference type="HAMAP" id="MF_00724">
    <property type="entry name" value="FliE"/>
    <property type="match status" value="1"/>
</dbReference>
<dbReference type="InterPro" id="IPR001624">
    <property type="entry name" value="FliE"/>
</dbReference>
<dbReference type="NCBIfam" id="TIGR00205">
    <property type="entry name" value="fliE"/>
    <property type="match status" value="1"/>
</dbReference>
<dbReference type="PANTHER" id="PTHR34653">
    <property type="match status" value="1"/>
</dbReference>
<dbReference type="PANTHER" id="PTHR34653:SF1">
    <property type="entry name" value="FLAGELLAR HOOK-BASAL BODY COMPLEX PROTEIN FLIE"/>
    <property type="match status" value="1"/>
</dbReference>
<dbReference type="Pfam" id="PF02049">
    <property type="entry name" value="FliE"/>
    <property type="match status" value="1"/>
</dbReference>
<dbReference type="PRINTS" id="PR01006">
    <property type="entry name" value="FLGHOOKFLIE"/>
</dbReference>
<organism>
    <name type="scientific">Escherichia coli (strain SE11)</name>
    <dbReference type="NCBI Taxonomy" id="409438"/>
    <lineage>
        <taxon>Bacteria</taxon>
        <taxon>Pseudomonadati</taxon>
        <taxon>Pseudomonadota</taxon>
        <taxon>Gammaproteobacteria</taxon>
        <taxon>Enterobacterales</taxon>
        <taxon>Enterobacteriaceae</taxon>
        <taxon>Escherichia</taxon>
    </lineage>
</organism>
<accession>B6I0Y4</accession>
<comment type="subcellular location">
    <subcellularLocation>
        <location evidence="1">Bacterial flagellum basal body</location>
    </subcellularLocation>
</comment>
<comment type="similarity">
    <text evidence="1">Belongs to the FliE family.</text>
</comment>
<evidence type="ECO:0000255" key="1">
    <source>
        <dbReference type="HAMAP-Rule" id="MF_00724"/>
    </source>
</evidence>
<name>FLIE_ECOSE</name>
<sequence length="104" mass="11113">MSAIQGIEGVISQLQATAMSARAQDSLPQPTISFAGQLHAALDRISDTQTAARTQAEKFTLGEPGVALNDVMTDMQKASVSMQMGIQVRNKLVAAYQEVMSMQV</sequence>
<reference key="1">
    <citation type="journal article" date="2008" name="DNA Res.">
        <title>Complete genome sequence and comparative analysis of the wild-type commensal Escherichia coli strain SE11 isolated from a healthy adult.</title>
        <authorList>
            <person name="Oshima K."/>
            <person name="Toh H."/>
            <person name="Ogura Y."/>
            <person name="Sasamoto H."/>
            <person name="Morita H."/>
            <person name="Park S.-H."/>
            <person name="Ooka T."/>
            <person name="Iyoda S."/>
            <person name="Taylor T.D."/>
            <person name="Hayashi T."/>
            <person name="Itoh K."/>
            <person name="Hattori M."/>
        </authorList>
    </citation>
    <scope>NUCLEOTIDE SEQUENCE [LARGE SCALE GENOMIC DNA]</scope>
    <source>
        <strain>SE11</strain>
    </source>
</reference>
<keyword id="KW-0975">Bacterial flagellum</keyword>
<protein>
    <recommendedName>
        <fullName evidence="1">Flagellar hook-basal body complex protein FliE</fullName>
    </recommendedName>
</protein>